<feature type="chain" id="PRO_1000013707" description="Probable M18 family aminopeptidase 2">
    <location>
        <begin position="1"/>
        <end position="429"/>
    </location>
</feature>
<feature type="binding site" evidence="1">
    <location>
        <position position="82"/>
    </location>
    <ligand>
        <name>Zn(2+)</name>
        <dbReference type="ChEBI" id="CHEBI:29105"/>
    </ligand>
</feature>
<feature type="binding site" evidence="1">
    <location>
        <position position="156"/>
    </location>
    <ligand>
        <name>Zn(2+)</name>
        <dbReference type="ChEBI" id="CHEBI:29105"/>
    </ligand>
</feature>
<feature type="binding site" evidence="1">
    <location>
        <position position="401"/>
    </location>
    <ligand>
        <name>Zn(2+)</name>
        <dbReference type="ChEBI" id="CHEBI:29105"/>
    </ligand>
</feature>
<name>APEB_PSEU2</name>
<keyword id="KW-0031">Aminopeptidase</keyword>
<keyword id="KW-0378">Hydrolase</keyword>
<keyword id="KW-0479">Metal-binding</keyword>
<keyword id="KW-0482">Metalloprotease</keyword>
<keyword id="KW-0645">Protease</keyword>
<keyword id="KW-0862">Zinc</keyword>
<gene>
    <name evidence="1" type="primary">apeB</name>
    <name type="ordered locus">Psyr_1609</name>
</gene>
<comment type="cofactor">
    <cofactor evidence="1">
        <name>Zn(2+)</name>
        <dbReference type="ChEBI" id="CHEBI:29105"/>
    </cofactor>
</comment>
<comment type="similarity">
    <text evidence="1">Belongs to the peptidase M18 family.</text>
</comment>
<sequence length="429" mass="46708">MRAELNKGLIDFLKASPTPFHATATLVQHFEAAGFQRLDERDTWAVETGGRYFVTRNDSSIVAFRMGRQSPLSGGIRMVGAHTDSPCLRVKPQPELQRQGFWQLGVEVYGGALLAPWFDRDLSLAGRVTFRRDGKVESQLIDFKLPIAVIPNLAIHLNRTANEGWAINAQNELPPILAQVAGDERADFRALLTDQLAREHGLNADVVLDYELSFYDTQGAAVVGLNGDFLAGARLDNLLSCFAGMQALLNTESDETALLVCTDHEEVGSSSACGADGAMLEQIVQRLLPSSEDYVRTIQKSLLISADNAHGIHPNYADKHDANHGPKLNAGPVIKVNSNQRYATNSETAGFFRHLCMAEEVPVQSFVVRSDMGCGSTIGPITASHLGIRTVDIGLPTFAMHSIRELAGSHDLAHLVKVLSAFYASHELP</sequence>
<organism>
    <name type="scientific">Pseudomonas syringae pv. syringae (strain B728a)</name>
    <dbReference type="NCBI Taxonomy" id="205918"/>
    <lineage>
        <taxon>Bacteria</taxon>
        <taxon>Pseudomonadati</taxon>
        <taxon>Pseudomonadota</taxon>
        <taxon>Gammaproteobacteria</taxon>
        <taxon>Pseudomonadales</taxon>
        <taxon>Pseudomonadaceae</taxon>
        <taxon>Pseudomonas</taxon>
        <taxon>Pseudomonas syringae</taxon>
    </lineage>
</organism>
<proteinExistence type="inferred from homology"/>
<reference key="1">
    <citation type="journal article" date="2005" name="Proc. Natl. Acad. Sci. U.S.A.">
        <title>Comparison of the complete genome sequences of Pseudomonas syringae pv. syringae B728a and pv. tomato DC3000.</title>
        <authorList>
            <person name="Feil H."/>
            <person name="Feil W.S."/>
            <person name="Chain P."/>
            <person name="Larimer F."/>
            <person name="Dibartolo G."/>
            <person name="Copeland A."/>
            <person name="Lykidis A."/>
            <person name="Trong S."/>
            <person name="Nolan M."/>
            <person name="Goltsman E."/>
            <person name="Thiel J."/>
            <person name="Malfatti S."/>
            <person name="Loper J.E."/>
            <person name="Lapidus A."/>
            <person name="Detter J.C."/>
            <person name="Land M."/>
            <person name="Richardson P.M."/>
            <person name="Kyrpides N.C."/>
            <person name="Ivanova N."/>
            <person name="Lindow S.E."/>
        </authorList>
    </citation>
    <scope>NUCLEOTIDE SEQUENCE [LARGE SCALE GENOMIC DNA]</scope>
    <source>
        <strain>B728a</strain>
    </source>
</reference>
<evidence type="ECO:0000255" key="1">
    <source>
        <dbReference type="HAMAP-Rule" id="MF_00467"/>
    </source>
</evidence>
<dbReference type="EC" id="3.4.11.-" evidence="1"/>
<dbReference type="EMBL" id="CP000075">
    <property type="protein sequence ID" value="AAY36657.1"/>
    <property type="molecule type" value="Genomic_DNA"/>
</dbReference>
<dbReference type="RefSeq" id="WP_011267127.1">
    <property type="nucleotide sequence ID" value="NC_007005.1"/>
</dbReference>
<dbReference type="RefSeq" id="YP_234695.1">
    <property type="nucleotide sequence ID" value="NC_007005.1"/>
</dbReference>
<dbReference type="SMR" id="Q4ZW15"/>
<dbReference type="KEGG" id="psb:Psyr_1609"/>
<dbReference type="PATRIC" id="fig|205918.7.peg.1643"/>
<dbReference type="eggNOG" id="COG1362">
    <property type="taxonomic scope" value="Bacteria"/>
</dbReference>
<dbReference type="HOGENOM" id="CLU_019532_2_0_6"/>
<dbReference type="OrthoDB" id="5288740at2"/>
<dbReference type="Proteomes" id="UP000000426">
    <property type="component" value="Chromosome"/>
</dbReference>
<dbReference type="GO" id="GO:0005737">
    <property type="term" value="C:cytoplasm"/>
    <property type="evidence" value="ECO:0007669"/>
    <property type="project" value="UniProtKB-ARBA"/>
</dbReference>
<dbReference type="GO" id="GO:0004177">
    <property type="term" value="F:aminopeptidase activity"/>
    <property type="evidence" value="ECO:0007669"/>
    <property type="project" value="UniProtKB-UniRule"/>
</dbReference>
<dbReference type="GO" id="GO:0008237">
    <property type="term" value="F:metallopeptidase activity"/>
    <property type="evidence" value="ECO:0007669"/>
    <property type="project" value="UniProtKB-UniRule"/>
</dbReference>
<dbReference type="GO" id="GO:0008270">
    <property type="term" value="F:zinc ion binding"/>
    <property type="evidence" value="ECO:0007669"/>
    <property type="project" value="UniProtKB-UniRule"/>
</dbReference>
<dbReference type="GO" id="GO:0006508">
    <property type="term" value="P:proteolysis"/>
    <property type="evidence" value="ECO:0007669"/>
    <property type="project" value="UniProtKB-UniRule"/>
</dbReference>
<dbReference type="CDD" id="cd05658">
    <property type="entry name" value="M18_DAP"/>
    <property type="match status" value="1"/>
</dbReference>
<dbReference type="FunFam" id="2.30.250.10:FF:000003">
    <property type="entry name" value="Probable M18 family aminopeptidase 2"/>
    <property type="match status" value="1"/>
</dbReference>
<dbReference type="Gene3D" id="2.30.250.10">
    <property type="entry name" value="Aminopeptidase i, Domain 2"/>
    <property type="match status" value="1"/>
</dbReference>
<dbReference type="Gene3D" id="3.40.630.10">
    <property type="entry name" value="Zn peptidases"/>
    <property type="match status" value="1"/>
</dbReference>
<dbReference type="HAMAP" id="MF_00467">
    <property type="entry name" value="Aminopeptidase_M18_2"/>
    <property type="match status" value="1"/>
</dbReference>
<dbReference type="InterPro" id="IPR022984">
    <property type="entry name" value="M18_aminopeptidase_2"/>
</dbReference>
<dbReference type="InterPro" id="IPR001948">
    <property type="entry name" value="Peptidase_M18"/>
</dbReference>
<dbReference type="InterPro" id="IPR023358">
    <property type="entry name" value="Peptidase_M18_dom2"/>
</dbReference>
<dbReference type="NCBIfam" id="NF002759">
    <property type="entry name" value="PRK02813.1"/>
    <property type="match status" value="1"/>
</dbReference>
<dbReference type="PANTHER" id="PTHR28570">
    <property type="entry name" value="ASPARTYL AMINOPEPTIDASE"/>
    <property type="match status" value="1"/>
</dbReference>
<dbReference type="PANTHER" id="PTHR28570:SF3">
    <property type="entry name" value="ASPARTYL AMINOPEPTIDASE"/>
    <property type="match status" value="1"/>
</dbReference>
<dbReference type="Pfam" id="PF02127">
    <property type="entry name" value="Peptidase_M18"/>
    <property type="match status" value="1"/>
</dbReference>
<dbReference type="PRINTS" id="PR00932">
    <property type="entry name" value="AMINO1PTASE"/>
</dbReference>
<dbReference type="SUPFAM" id="SSF101821">
    <property type="entry name" value="Aminopeptidase/glucanase lid domain"/>
    <property type="match status" value="1"/>
</dbReference>
<dbReference type="SUPFAM" id="SSF53187">
    <property type="entry name" value="Zn-dependent exopeptidases"/>
    <property type="match status" value="1"/>
</dbReference>
<accession>Q4ZW15</accession>
<protein>
    <recommendedName>
        <fullName evidence="1">Probable M18 family aminopeptidase 2</fullName>
        <ecNumber evidence="1">3.4.11.-</ecNumber>
    </recommendedName>
</protein>